<reference key="1">
    <citation type="submission" date="1997-11" db="EMBL/GenBank/DDBJ databases">
        <authorList>
            <person name="Korn A.M."/>
            <person name="Baysdorfer C."/>
        </authorList>
    </citation>
    <scope>NUCLEOTIDE SEQUENCE [MRNA]</scope>
    <source>
        <strain>cv. B73</strain>
    </source>
</reference>
<reference key="2">
    <citation type="submission" date="1996-09" db="EMBL/GenBank/DDBJ databases">
        <authorList>
            <person name="Cordts S."/>
            <person name="Loerz H."/>
            <person name="Dresselhaus T."/>
        </authorList>
    </citation>
    <scope>NUCLEOTIDE SEQUENCE [MRNA]</scope>
    <source>
        <strain>cv. A188</strain>
    </source>
</reference>
<reference key="3">
    <citation type="journal article" date="1996" name="Theor. Appl. Genet.">
        <title>The maize two dimensional gel protein database: towards an integrated genome analysis program.</title>
        <authorList>
            <person name="Touzet P."/>
            <person name="Riccardi F."/>
            <person name="Morin C."/>
            <person name="Damerval C."/>
            <person name="Huet J.-C."/>
            <person name="Pernollet J.-C."/>
            <person name="Zivy M."/>
            <person name="de Vienne D."/>
        </authorList>
        <dbReference type="AGRICOLA" id="IND20551642"/>
    </citation>
    <scope>PROTEIN SEQUENCE OF 71-78 AND 118-129</scope>
    <source>
        <tissue>Coleoptile</tissue>
    </source>
</reference>
<accession>P80639</accession>
<accession>P56332</accession>
<evidence type="ECO:0000250" key="1">
    <source>
        <dbReference type="UniProtKB" id="P23301"/>
    </source>
</evidence>
<evidence type="ECO:0000250" key="2">
    <source>
        <dbReference type="UniProtKB" id="Q9XI91"/>
    </source>
</evidence>
<evidence type="ECO:0000256" key="3">
    <source>
        <dbReference type="SAM" id="MobiDB-lite"/>
    </source>
</evidence>
<evidence type="ECO:0000305" key="4"/>
<sequence length="160" mass="17497">MSDSEEHHFESKADAGASKTYPQQAGTVRKNGFIVIKNRPCKVVEVSTSKTGKHGHAKCHFVAIDIFNGKKLEDIVPSSHNCDIPHVNRTEYQLIDISEDGFVSLLTSDGNTKDDLRLPTDETLVAQIKEGFESGKDLVVTVQSAMGEEQICALKDVGPK</sequence>
<gene>
    <name type="primary">TIF5A</name>
</gene>
<dbReference type="EMBL" id="AF034943">
    <property type="protein sequence ID" value="AAB88614.1"/>
    <property type="molecule type" value="mRNA"/>
</dbReference>
<dbReference type="EMBL" id="Y07920">
    <property type="protein sequence ID" value="CAA69225.1"/>
    <property type="molecule type" value="mRNA"/>
</dbReference>
<dbReference type="PIR" id="T01355">
    <property type="entry name" value="T01355"/>
</dbReference>
<dbReference type="RefSeq" id="NP_001105550.1">
    <property type="nucleotide sequence ID" value="NM_001112080.1"/>
</dbReference>
<dbReference type="RefSeq" id="NP_001105606.1">
    <property type="nucleotide sequence ID" value="NM_001112136.1"/>
</dbReference>
<dbReference type="SMR" id="P80639"/>
<dbReference type="FunCoup" id="P80639">
    <property type="interactions" value="3293"/>
</dbReference>
<dbReference type="STRING" id="4577.P80639"/>
<dbReference type="iPTMnet" id="P80639"/>
<dbReference type="PaxDb" id="4577-GRMZM2G113696_P01"/>
<dbReference type="EnsemblPlants" id="Zm00001eb108410_T001">
    <property type="protein sequence ID" value="Zm00001eb108410_P001"/>
    <property type="gene ID" value="Zm00001eb108410"/>
</dbReference>
<dbReference type="EnsemblPlants" id="Zm00001eb326630_T002">
    <property type="protein sequence ID" value="Zm00001eb326630_P002"/>
    <property type="gene ID" value="Zm00001eb326630"/>
</dbReference>
<dbReference type="GeneID" id="542537"/>
<dbReference type="GeneID" id="542601"/>
<dbReference type="Gramene" id="Zm00001eb108410_T001">
    <property type="protein sequence ID" value="Zm00001eb108410_P001"/>
    <property type="gene ID" value="Zm00001eb108410"/>
</dbReference>
<dbReference type="Gramene" id="Zm00001eb326630_T002">
    <property type="protein sequence ID" value="Zm00001eb326630_P002"/>
    <property type="gene ID" value="Zm00001eb326630"/>
</dbReference>
<dbReference type="KEGG" id="zma:542537"/>
<dbReference type="KEGG" id="zma:542601"/>
<dbReference type="MaizeGDB" id="123964"/>
<dbReference type="eggNOG" id="KOG3271">
    <property type="taxonomic scope" value="Eukaryota"/>
</dbReference>
<dbReference type="HOGENOM" id="CLU_102600_1_0_1"/>
<dbReference type="InParanoid" id="P80639"/>
<dbReference type="OMA" id="KDDVRMP"/>
<dbReference type="OrthoDB" id="9975114at2759"/>
<dbReference type="Proteomes" id="UP000007305">
    <property type="component" value="Chromosome 2"/>
</dbReference>
<dbReference type="Proteomes" id="UP000007305">
    <property type="component" value="Chromosome 7"/>
</dbReference>
<dbReference type="ExpressionAtlas" id="P80639">
    <property type="expression patterns" value="baseline and differential"/>
</dbReference>
<dbReference type="GO" id="GO:0043022">
    <property type="term" value="F:ribosome binding"/>
    <property type="evidence" value="ECO:0007669"/>
    <property type="project" value="InterPro"/>
</dbReference>
<dbReference type="GO" id="GO:0003723">
    <property type="term" value="F:RNA binding"/>
    <property type="evidence" value="ECO:0007669"/>
    <property type="project" value="InterPro"/>
</dbReference>
<dbReference type="GO" id="GO:0003746">
    <property type="term" value="F:translation elongation factor activity"/>
    <property type="evidence" value="ECO:0000318"/>
    <property type="project" value="GO_Central"/>
</dbReference>
<dbReference type="GO" id="GO:0003743">
    <property type="term" value="F:translation initiation factor activity"/>
    <property type="evidence" value="ECO:0007669"/>
    <property type="project" value="UniProtKB-KW"/>
</dbReference>
<dbReference type="GO" id="GO:0045901">
    <property type="term" value="P:positive regulation of translational elongation"/>
    <property type="evidence" value="ECO:0007669"/>
    <property type="project" value="InterPro"/>
</dbReference>
<dbReference type="GO" id="GO:0045905">
    <property type="term" value="P:positive regulation of translational termination"/>
    <property type="evidence" value="ECO:0007669"/>
    <property type="project" value="InterPro"/>
</dbReference>
<dbReference type="GO" id="GO:0006414">
    <property type="term" value="P:translational elongation"/>
    <property type="evidence" value="ECO:0000318"/>
    <property type="project" value="GO_Central"/>
</dbReference>
<dbReference type="CDD" id="cd04468">
    <property type="entry name" value="S1_eIF5A"/>
    <property type="match status" value="1"/>
</dbReference>
<dbReference type="FunFam" id="2.30.30.30:FF:000012">
    <property type="entry name" value="Eukaryotic translation initiation factor 5A"/>
    <property type="match status" value="1"/>
</dbReference>
<dbReference type="FunFam" id="2.40.50.140:FF:000034">
    <property type="entry name" value="Eukaryotic translation initiation factor 5A"/>
    <property type="match status" value="1"/>
</dbReference>
<dbReference type="Gene3D" id="2.30.30.30">
    <property type="match status" value="1"/>
</dbReference>
<dbReference type="Gene3D" id="2.40.50.140">
    <property type="entry name" value="Nucleic acid-binding proteins"/>
    <property type="match status" value="1"/>
</dbReference>
<dbReference type="InterPro" id="IPR001884">
    <property type="entry name" value="IF5A-like"/>
</dbReference>
<dbReference type="InterPro" id="IPR048670">
    <property type="entry name" value="IF5A-like_N"/>
</dbReference>
<dbReference type="InterPro" id="IPR012340">
    <property type="entry name" value="NA-bd_OB-fold"/>
</dbReference>
<dbReference type="InterPro" id="IPR014722">
    <property type="entry name" value="Rib_uL2_dom2"/>
</dbReference>
<dbReference type="InterPro" id="IPR019769">
    <property type="entry name" value="Trans_elong_IF5A_hypusine_site"/>
</dbReference>
<dbReference type="InterPro" id="IPR020189">
    <property type="entry name" value="Transl_elong_IF5A_C"/>
</dbReference>
<dbReference type="InterPro" id="IPR008991">
    <property type="entry name" value="Translation_prot_SH3-like_sf"/>
</dbReference>
<dbReference type="NCBIfam" id="TIGR00037">
    <property type="entry name" value="eIF_5A"/>
    <property type="match status" value="1"/>
</dbReference>
<dbReference type="PANTHER" id="PTHR11673">
    <property type="entry name" value="TRANSLATION INITIATION FACTOR 5A FAMILY MEMBER"/>
    <property type="match status" value="1"/>
</dbReference>
<dbReference type="Pfam" id="PF01287">
    <property type="entry name" value="eIF-5a"/>
    <property type="match status" value="1"/>
</dbReference>
<dbReference type="Pfam" id="PF21485">
    <property type="entry name" value="IF5A-like_N"/>
    <property type="match status" value="1"/>
</dbReference>
<dbReference type="PIRSF" id="PIRSF003025">
    <property type="entry name" value="eIF5A"/>
    <property type="match status" value="1"/>
</dbReference>
<dbReference type="SMART" id="SM01376">
    <property type="entry name" value="eIF-5a"/>
    <property type="match status" value="1"/>
</dbReference>
<dbReference type="SUPFAM" id="SSF50249">
    <property type="entry name" value="Nucleic acid-binding proteins"/>
    <property type="match status" value="1"/>
</dbReference>
<dbReference type="SUPFAM" id="SSF50104">
    <property type="entry name" value="Translation proteins SH3-like domain"/>
    <property type="match status" value="1"/>
</dbReference>
<dbReference type="PROSITE" id="PS00302">
    <property type="entry name" value="IF5A_HYPUSINE"/>
    <property type="match status" value="1"/>
</dbReference>
<name>IF5A_MAIZE</name>
<organism>
    <name type="scientific">Zea mays</name>
    <name type="common">Maize</name>
    <dbReference type="NCBI Taxonomy" id="4577"/>
    <lineage>
        <taxon>Eukaryota</taxon>
        <taxon>Viridiplantae</taxon>
        <taxon>Streptophyta</taxon>
        <taxon>Embryophyta</taxon>
        <taxon>Tracheophyta</taxon>
        <taxon>Spermatophyta</taxon>
        <taxon>Magnoliopsida</taxon>
        <taxon>Liliopsida</taxon>
        <taxon>Poales</taxon>
        <taxon>Poaceae</taxon>
        <taxon>PACMAD clade</taxon>
        <taxon>Panicoideae</taxon>
        <taxon>Andropogonodae</taxon>
        <taxon>Andropogoneae</taxon>
        <taxon>Tripsacinae</taxon>
        <taxon>Zea</taxon>
    </lineage>
</organism>
<protein>
    <recommendedName>
        <fullName>Eukaryotic translation initiation factor 5A</fullName>
        <shortName>eIF-5A</shortName>
    </recommendedName>
    <alternativeName>
        <fullName>eIF-4D</fullName>
    </alternativeName>
</protein>
<feature type="chain" id="PRO_0000142471" description="Eukaryotic translation initiation factor 5A">
    <location>
        <begin position="1"/>
        <end position="160"/>
    </location>
</feature>
<feature type="region of interest" description="Disordered" evidence="3">
    <location>
        <begin position="1"/>
        <end position="22"/>
    </location>
</feature>
<feature type="compositionally biased region" description="Basic and acidic residues" evidence="3">
    <location>
        <begin position="1"/>
        <end position="13"/>
    </location>
</feature>
<feature type="modified residue" description="Hypusine" evidence="2">
    <location>
        <position position="53"/>
    </location>
</feature>
<proteinExistence type="evidence at protein level"/>
<keyword id="KW-0903">Direct protein sequencing</keyword>
<keyword id="KW-0385">Hypusine</keyword>
<keyword id="KW-0396">Initiation factor</keyword>
<keyword id="KW-0648">Protein biosynthesis</keyword>
<keyword id="KW-1185">Reference proteome</keyword>
<comment type="function">
    <text evidence="1">Translation factor that promotes translation elongation and termination, particularly upon ribosome stalling at specific amino acid sequence contexts (By similarity). Binds between the exit (E) and peptidyl (P) site of the ribosome and promotes rescue of stalled ribosome: specifically required for efficient translation of polyproline-containing peptides as well as other motifs that stall the ribosome (By similarity). Acts as a ribosome quality control (RQC) cofactor by joining the RQC complex to facilitate peptidyl transfer during CAT tailing step (By similarity).</text>
</comment>
<comment type="PTM">
    <text evidence="2">Lys-53 undergoes hypusination, a unique post-translational modification that consists in the addition of a butylamino group from spermidine to lysine side chain, leading to the formation of the unusual amino acid hypusine. eIF-5As are the only known proteins to undergo this modification, which is essential for their function.</text>
</comment>
<comment type="similarity">
    <text evidence="4">Belongs to the eIF-5A family.</text>
</comment>